<organism>
    <name type="scientific">Orientia tsutsugamushi (strain Ikeda)</name>
    <name type="common">Rickettsia tsutsugamushi</name>
    <dbReference type="NCBI Taxonomy" id="334380"/>
    <lineage>
        <taxon>Bacteria</taxon>
        <taxon>Pseudomonadati</taxon>
        <taxon>Pseudomonadota</taxon>
        <taxon>Alphaproteobacteria</taxon>
        <taxon>Rickettsiales</taxon>
        <taxon>Rickettsiaceae</taxon>
        <taxon>Rickettsieae</taxon>
        <taxon>Orientia</taxon>
    </lineage>
</organism>
<evidence type="ECO:0000250" key="1"/>
<evidence type="ECO:0000255" key="2">
    <source>
        <dbReference type="HAMAP-Rule" id="MF_00403"/>
    </source>
</evidence>
<evidence type="ECO:0000305" key="3"/>
<dbReference type="EMBL" id="AP008981">
    <property type="protein sequence ID" value="BAG40642.1"/>
    <property type="molecule type" value="Genomic_DNA"/>
</dbReference>
<dbReference type="RefSeq" id="WP_012461711.1">
    <property type="nucleotide sequence ID" value="NC_010793.1"/>
</dbReference>
<dbReference type="SMR" id="B3CTE5"/>
<dbReference type="GeneID" id="89458848"/>
<dbReference type="KEGG" id="ott:OTT_1184"/>
<dbReference type="HOGENOM" id="CLU_104295_1_2_5"/>
<dbReference type="OrthoDB" id="9802366at2"/>
<dbReference type="Proteomes" id="UP000001033">
    <property type="component" value="Chromosome"/>
</dbReference>
<dbReference type="GO" id="GO:0015935">
    <property type="term" value="C:small ribosomal subunit"/>
    <property type="evidence" value="ECO:0007669"/>
    <property type="project" value="InterPro"/>
</dbReference>
<dbReference type="GO" id="GO:0019843">
    <property type="term" value="F:rRNA binding"/>
    <property type="evidence" value="ECO:0007669"/>
    <property type="project" value="UniProtKB-UniRule"/>
</dbReference>
<dbReference type="GO" id="GO:0003735">
    <property type="term" value="F:structural constituent of ribosome"/>
    <property type="evidence" value="ECO:0007669"/>
    <property type="project" value="InterPro"/>
</dbReference>
<dbReference type="GO" id="GO:0000049">
    <property type="term" value="F:tRNA binding"/>
    <property type="evidence" value="ECO:0007669"/>
    <property type="project" value="UniProtKB-UniRule"/>
</dbReference>
<dbReference type="GO" id="GO:0006412">
    <property type="term" value="P:translation"/>
    <property type="evidence" value="ECO:0007669"/>
    <property type="project" value="UniProtKB-UniRule"/>
</dbReference>
<dbReference type="CDD" id="cd03368">
    <property type="entry name" value="Ribosomal_S12"/>
    <property type="match status" value="1"/>
</dbReference>
<dbReference type="FunFam" id="2.40.50.140:FF:000099">
    <property type="entry name" value="Ribosomal protein S12, mitochondrial"/>
    <property type="match status" value="1"/>
</dbReference>
<dbReference type="Gene3D" id="2.40.50.140">
    <property type="entry name" value="Nucleic acid-binding proteins"/>
    <property type="match status" value="1"/>
</dbReference>
<dbReference type="HAMAP" id="MF_00403_B">
    <property type="entry name" value="Ribosomal_uS12_B"/>
    <property type="match status" value="1"/>
</dbReference>
<dbReference type="InterPro" id="IPR012340">
    <property type="entry name" value="NA-bd_OB-fold"/>
</dbReference>
<dbReference type="InterPro" id="IPR006032">
    <property type="entry name" value="Ribosomal_uS12"/>
</dbReference>
<dbReference type="InterPro" id="IPR005679">
    <property type="entry name" value="Ribosomal_uS12_bac"/>
</dbReference>
<dbReference type="NCBIfam" id="TIGR00981">
    <property type="entry name" value="rpsL_bact"/>
    <property type="match status" value="1"/>
</dbReference>
<dbReference type="PANTHER" id="PTHR11652">
    <property type="entry name" value="30S RIBOSOMAL PROTEIN S12 FAMILY MEMBER"/>
    <property type="match status" value="1"/>
</dbReference>
<dbReference type="Pfam" id="PF00164">
    <property type="entry name" value="Ribosom_S12_S23"/>
    <property type="match status" value="1"/>
</dbReference>
<dbReference type="PIRSF" id="PIRSF002133">
    <property type="entry name" value="Ribosomal_S12/S23"/>
    <property type="match status" value="1"/>
</dbReference>
<dbReference type="PRINTS" id="PR01034">
    <property type="entry name" value="RIBOSOMALS12"/>
</dbReference>
<dbReference type="SUPFAM" id="SSF50249">
    <property type="entry name" value="Nucleic acid-binding proteins"/>
    <property type="match status" value="1"/>
</dbReference>
<dbReference type="PROSITE" id="PS00055">
    <property type="entry name" value="RIBOSOMAL_S12"/>
    <property type="match status" value="1"/>
</dbReference>
<comment type="function">
    <text evidence="2">With S4 and S5 plays an important role in translational accuracy.</text>
</comment>
<comment type="function">
    <text evidence="2">Interacts with and stabilizes bases of the 16S rRNA that are involved in tRNA selection in the A site and with the mRNA backbone. Located at the interface of the 30S and 50S subunits, it traverses the body of the 30S subunit contacting proteins on the other side and probably holding the rRNA structure together. The combined cluster of proteins S8, S12 and S17 appears to hold together the shoulder and platform of the 30S subunit.</text>
</comment>
<comment type="subunit">
    <text evidence="2">Part of the 30S ribosomal subunit. Contacts proteins S8 and S17. May interact with IF1 in the 30S initiation complex.</text>
</comment>
<comment type="similarity">
    <text evidence="2">Belongs to the universal ribosomal protein uS12 family.</text>
</comment>
<accession>B3CTE5</accession>
<name>RS12_ORITI</name>
<proteinExistence type="inferred from homology"/>
<gene>
    <name evidence="2" type="primary">rpsL</name>
    <name type="ordered locus">OTT_1184</name>
</gene>
<keyword id="KW-0488">Methylation</keyword>
<keyword id="KW-0687">Ribonucleoprotein</keyword>
<keyword id="KW-0689">Ribosomal protein</keyword>
<keyword id="KW-0694">RNA-binding</keyword>
<keyword id="KW-0699">rRNA-binding</keyword>
<keyword id="KW-0820">tRNA-binding</keyword>
<reference key="1">
    <citation type="journal article" date="2008" name="DNA Res.">
        <title>The whole-genome sequencing of the obligate intracellular bacterium Orientia tsutsugamushi revealed massive gene amplification during reductive genome evolution.</title>
        <authorList>
            <person name="Nakayama K."/>
            <person name="Yamashita A."/>
            <person name="Kurokawa K."/>
            <person name="Morimoto T."/>
            <person name="Ogawa M."/>
            <person name="Fukuhara M."/>
            <person name="Urakami H."/>
            <person name="Ohnishi M."/>
            <person name="Uchiyama I."/>
            <person name="Ogura Y."/>
            <person name="Ooka T."/>
            <person name="Oshima K."/>
            <person name="Tamura A."/>
            <person name="Hattori M."/>
            <person name="Hayashi T."/>
        </authorList>
    </citation>
    <scope>NUCLEOTIDE SEQUENCE [LARGE SCALE GENOMIC DNA]</scope>
    <source>
        <strain>Ikeda</strain>
    </source>
</reference>
<protein>
    <recommendedName>
        <fullName evidence="2">Small ribosomal subunit protein uS12</fullName>
    </recommendedName>
    <alternativeName>
        <fullName evidence="3">30S ribosomal protein S12</fullName>
    </alternativeName>
</protein>
<sequence>MPTNNQLVRCGRKSKIRASKSPALNGNPFAKGVCVLVKTITPRKPNSALRKMARVRFRNGTCVNAYIPGEGHNLQEHSTVLVRGGRVPDLPGVRYHIVRGVYDTQGVKNRKQGRSRYGAKRPK</sequence>
<feature type="chain" id="PRO_1000194202" description="Small ribosomal subunit protein uS12">
    <location>
        <begin position="1"/>
        <end position="123"/>
    </location>
</feature>
<feature type="modified residue" description="3-methylthioaspartic acid" evidence="1">
    <location>
        <position position="89"/>
    </location>
</feature>